<keyword id="KW-0539">Nucleus</keyword>
<keyword id="KW-1185">Reference proteome</keyword>
<keyword id="KW-0804">Transcription</keyword>
<keyword id="KW-0805">Transcription regulation</keyword>
<sequence length="618" mass="66858">MAEGKKIGNTLLPSESMKVISESVGISQMSEETCQLLAQEVSFRIKEVTQDALKFMHVGKRQKLTPSDIDAALKLKNVEPIYGFHPKEFLPFRYASGGGRELHFYEEKETDLSDIISTPLPRVPLDVSLKAHWLSIEGVQPAIPENPPPVPKEQQKTEATEPLKVAKPGQEEGLPGKGQGSGEGKGKEKKTAILEGAPLKLKPRSIHELSVEQQLYYKEITEACVGSCEAKRAEALQSIATDPGLYQMLPRFSTFISEGVRVNVVQNNLALLIYLMRMVKALMDNPTLYLEKYLHELIPAVMTCIVSRQLCLRPDVDNHWALRDFAARLIAQICKNFSTTTNNIQSRITKTFTKTWVDDRTPWTTRYGSIAGLAELGPDVVKTLIVPRLTVEGERLRSVLDGPVISNIDKIGADHVQSLLLKHSAPVLVKLRSPPDSPDAYRADYGYLGPTLCTHVLKARAQSALQGPQVNRTTLTVTQPRPTLTLSQPSGSLTPSPRTPSIIKVPSSLTLPVQTLMSARPATPTQPSPPPTKYIVVSSAGSSGTQVLTTSSGPSPSTPGVQPIVKLVSGGQSSGVGGSMTGTGGGMQKYIVVSLPPAGESKTPQPSPPPPTTETSTL</sequence>
<protein>
    <recommendedName>
        <fullName>Transcription initiation factor TFIID subunit 6</fullName>
        <shortName>xTAF6</shortName>
    </recommendedName>
    <alternativeName>
        <fullName>Transcription initiation factor TFIID 60 kDa subunit</fullName>
        <shortName>TAF(II)60</shortName>
        <shortName>TAFII-60</shortName>
        <shortName>TAFII60</shortName>
    </alternativeName>
    <alternativeName>
        <fullName>Transcription initiation factor TFIID 70 kDa subunit</fullName>
        <shortName>TAF(II)70</shortName>
        <shortName>TAFII-70</shortName>
        <shortName>TAFII70</shortName>
    </alternativeName>
</protein>
<evidence type="ECO:0000250" key="1"/>
<evidence type="ECO:0000250" key="2">
    <source>
        <dbReference type="UniProtKB" id="P49848"/>
    </source>
</evidence>
<evidence type="ECO:0000256" key="3">
    <source>
        <dbReference type="SAM" id="MobiDB-lite"/>
    </source>
</evidence>
<evidence type="ECO:0000269" key="4">
    <source>
    </source>
</evidence>
<evidence type="ECO:0000305" key="5"/>
<accession>Q91857</accession>
<accession>Q6NU26</accession>
<comment type="function">
    <text evidence="2">The TFIID basal transcription factor complex plays a major role in the initiation of RNA polymerase II (Pol II)-dependent transcription. TFIID recognizes and binds promoters with or without a TATA box via its subunit tbp, a TATA-box-binding protein, and promotes assembly of the pre-initiation complex (PIC). The TFIID complex consists of tbp and TBP-associated factors (TAFs).</text>
</comment>
<comment type="subunit">
    <text evidence="2">Component of the TFIID basal transcription factor complex, composed of TATA-box-binding protein tbp, and a number of TBP-associated factors (TAFs). Component of the TBP-free TAFII-histone acetylase complex (TFTC-HAT).</text>
</comment>
<comment type="subcellular location">
    <subcellularLocation>
        <location evidence="1">Nucleus</location>
    </subcellularLocation>
</comment>
<comment type="tissue specificity">
    <text evidence="4">Expressed in all tissues examined, including heart, liver, lung, kidney, spleen, ovary and testis.</text>
</comment>
<comment type="similarity">
    <text evidence="5">Belongs to the TAF6 family.</text>
</comment>
<feature type="chain" id="PRO_0000118876" description="Transcription initiation factor TFIID subunit 6">
    <location>
        <begin position="1"/>
        <end position="618"/>
    </location>
</feature>
<feature type="region of interest" description="Disordered" evidence="3">
    <location>
        <begin position="140"/>
        <end position="189"/>
    </location>
</feature>
<feature type="region of interest" description="Disordered" evidence="3">
    <location>
        <begin position="476"/>
        <end position="504"/>
    </location>
</feature>
<feature type="region of interest" description="Disordered" evidence="3">
    <location>
        <begin position="544"/>
        <end position="563"/>
    </location>
</feature>
<feature type="region of interest" description="Disordered" evidence="3">
    <location>
        <begin position="569"/>
        <end position="618"/>
    </location>
</feature>
<feature type="compositionally biased region" description="Polar residues" evidence="3">
    <location>
        <begin position="476"/>
        <end position="496"/>
    </location>
</feature>
<feature type="compositionally biased region" description="Low complexity" evidence="3">
    <location>
        <begin position="549"/>
        <end position="560"/>
    </location>
</feature>
<feature type="compositionally biased region" description="Gly residues" evidence="3">
    <location>
        <begin position="572"/>
        <end position="587"/>
    </location>
</feature>
<feature type="sequence conflict" description="In Ref. 1; BAA18922." evidence="5" ref="1">
    <original>E</original>
    <variation>K</variation>
    <location>
        <position position="195"/>
    </location>
</feature>
<feature type="sequence conflict" description="In Ref. 1; BAA18922." evidence="5" ref="1">
    <original>P</original>
    <variation>A</variation>
    <location>
        <position position="378"/>
    </location>
</feature>
<feature type="sequence conflict" description="In Ref. 1; BAA18922." evidence="5" ref="1">
    <original>P</original>
    <variation>A</variation>
    <location>
        <position position="489"/>
    </location>
</feature>
<organism>
    <name type="scientific">Xenopus laevis</name>
    <name type="common">African clawed frog</name>
    <dbReference type="NCBI Taxonomy" id="8355"/>
    <lineage>
        <taxon>Eukaryota</taxon>
        <taxon>Metazoa</taxon>
        <taxon>Chordata</taxon>
        <taxon>Craniata</taxon>
        <taxon>Vertebrata</taxon>
        <taxon>Euteleostomi</taxon>
        <taxon>Amphibia</taxon>
        <taxon>Batrachia</taxon>
        <taxon>Anura</taxon>
        <taxon>Pipoidea</taxon>
        <taxon>Pipidae</taxon>
        <taxon>Xenopodinae</taxon>
        <taxon>Xenopus</taxon>
        <taxon>Xenopus</taxon>
    </lineage>
</organism>
<reference key="1">
    <citation type="journal article" date="1995" name="Gene">
        <title>The sequence of a Xenopus laevis TFIID subunit reveals remarkable conservation among vertebrates.</title>
        <authorList>
            <person name="Hasegawa S."/>
            <person name="Kuzuhara T."/>
            <person name="Horikoshi M."/>
        </authorList>
    </citation>
    <scope>NUCLEOTIDE SEQUENCE [MRNA]</scope>
    <source>
        <tissue>Oocyte</tissue>
    </source>
</reference>
<reference key="2">
    <citation type="submission" date="1998-05" db="EMBL/GenBank/DDBJ databases">
        <authorList>
            <person name="Horikoshi M."/>
        </authorList>
    </citation>
    <scope>SEQUENCE REVISION</scope>
</reference>
<reference key="3">
    <citation type="submission" date="2004-04" db="EMBL/GenBank/DDBJ databases">
        <authorList>
            <consortium name="NIH - Xenopus Gene Collection (XGC) project"/>
        </authorList>
    </citation>
    <scope>NUCLEOTIDE SEQUENCE [LARGE SCALE MRNA]</scope>
    <source>
        <tissue>Embryo</tissue>
    </source>
</reference>
<reference key="4">
    <citation type="journal article" date="2006" name="Gene Expr. Patterns">
        <title>Developmental and cell type-specific regulation of core promoter transcription factors in germ cells of frogs and mice.</title>
        <authorList>
            <person name="Xiao L."/>
            <person name="Kim M."/>
            <person name="DeJong J."/>
        </authorList>
    </citation>
    <scope>TISSUE SPECIFICITY</scope>
</reference>
<dbReference type="EMBL" id="D50054">
    <property type="protein sequence ID" value="BAA18922.1"/>
    <property type="molecule type" value="mRNA"/>
</dbReference>
<dbReference type="EMBL" id="BC068776">
    <property type="protein sequence ID" value="AAH68776.1"/>
    <property type="molecule type" value="mRNA"/>
</dbReference>
<dbReference type="PIR" id="JC4366">
    <property type="entry name" value="JC4366"/>
</dbReference>
<dbReference type="RefSeq" id="NP_001081232.1">
    <property type="nucleotide sequence ID" value="NM_001087763.1"/>
</dbReference>
<dbReference type="SMR" id="Q91857"/>
<dbReference type="BioGRID" id="99064">
    <property type="interactions" value="1"/>
</dbReference>
<dbReference type="IntAct" id="Q91857">
    <property type="interactions" value="1"/>
</dbReference>
<dbReference type="DNASU" id="397724"/>
<dbReference type="GeneID" id="397724"/>
<dbReference type="KEGG" id="xla:397724"/>
<dbReference type="AGR" id="Xenbase:XB-GENE-5774722"/>
<dbReference type="CTD" id="397724"/>
<dbReference type="Xenbase" id="XB-GENE-5774722">
    <property type="gene designation" value="taf6.L"/>
</dbReference>
<dbReference type="OrthoDB" id="361039at2759"/>
<dbReference type="Proteomes" id="UP000186698">
    <property type="component" value="Chromosome 3L"/>
</dbReference>
<dbReference type="Bgee" id="397724">
    <property type="expression patterns" value="Expressed in oocyte and 19 other cell types or tissues"/>
</dbReference>
<dbReference type="GO" id="GO:0071339">
    <property type="term" value="C:MLL1 complex"/>
    <property type="evidence" value="ECO:0000250"/>
    <property type="project" value="UniProtKB"/>
</dbReference>
<dbReference type="GO" id="GO:0000124">
    <property type="term" value="C:SAGA complex"/>
    <property type="evidence" value="ECO:0007669"/>
    <property type="project" value="InterPro"/>
</dbReference>
<dbReference type="GO" id="GO:0046695">
    <property type="term" value="C:SLIK (SAGA-like) complex"/>
    <property type="evidence" value="ECO:0007669"/>
    <property type="project" value="InterPro"/>
</dbReference>
<dbReference type="GO" id="GO:0005669">
    <property type="term" value="C:transcription factor TFIID complex"/>
    <property type="evidence" value="ECO:0000318"/>
    <property type="project" value="GO_Central"/>
</dbReference>
<dbReference type="GO" id="GO:0046982">
    <property type="term" value="F:protein heterodimerization activity"/>
    <property type="evidence" value="ECO:0007669"/>
    <property type="project" value="InterPro"/>
</dbReference>
<dbReference type="GO" id="GO:0016251">
    <property type="term" value="F:RNA polymerase II general transcription initiation factor activity"/>
    <property type="evidence" value="ECO:0007669"/>
    <property type="project" value="InterPro"/>
</dbReference>
<dbReference type="GO" id="GO:0003713">
    <property type="term" value="F:transcription coactivator activity"/>
    <property type="evidence" value="ECO:0000318"/>
    <property type="project" value="GO_Central"/>
</dbReference>
<dbReference type="GO" id="GO:0051123">
    <property type="term" value="P:RNA polymerase II preinitiation complex assembly"/>
    <property type="evidence" value="ECO:0000318"/>
    <property type="project" value="GO_Central"/>
</dbReference>
<dbReference type="CDD" id="cd22931">
    <property type="entry name" value="HFD_TAF6"/>
    <property type="match status" value="1"/>
</dbReference>
<dbReference type="CDD" id="cd08050">
    <property type="entry name" value="TAF6C"/>
    <property type="match status" value="1"/>
</dbReference>
<dbReference type="FunFam" id="1.10.20.10:FF:000030">
    <property type="entry name" value="Transcription initiation factor TFIID subunit 6"/>
    <property type="match status" value="1"/>
</dbReference>
<dbReference type="FunFam" id="1.25.40.770:FF:000001">
    <property type="entry name" value="Transcription initiation factor TFIID subunit 6"/>
    <property type="match status" value="1"/>
</dbReference>
<dbReference type="Gene3D" id="1.10.20.10">
    <property type="entry name" value="Histone, subunit A"/>
    <property type="match status" value="1"/>
</dbReference>
<dbReference type="Gene3D" id="1.25.40.770">
    <property type="entry name" value="TAF6, C-terminal HEAT repeat domain"/>
    <property type="match status" value="1"/>
</dbReference>
<dbReference type="InterPro" id="IPR016024">
    <property type="entry name" value="ARM-type_fold"/>
</dbReference>
<dbReference type="InterPro" id="IPR009072">
    <property type="entry name" value="Histone-fold"/>
</dbReference>
<dbReference type="InterPro" id="IPR037796">
    <property type="entry name" value="TAF6"/>
</dbReference>
<dbReference type="InterPro" id="IPR011442">
    <property type="entry name" value="TAF6_C"/>
</dbReference>
<dbReference type="InterPro" id="IPR046344">
    <property type="entry name" value="TAF6_C_sf"/>
</dbReference>
<dbReference type="InterPro" id="IPR004823">
    <property type="entry name" value="TAF_TATA-bd_Histone-like_dom"/>
</dbReference>
<dbReference type="PANTHER" id="PTHR10221">
    <property type="entry name" value="TRANSCRIPTION INITIATION FACTOR TFIID SUBUNIT 6"/>
    <property type="match status" value="1"/>
</dbReference>
<dbReference type="PANTHER" id="PTHR10221:SF9">
    <property type="entry name" value="TRANSCRIPTION INITIATION FACTOR TFIID SUBUNIT 6"/>
    <property type="match status" value="1"/>
</dbReference>
<dbReference type="Pfam" id="PF02969">
    <property type="entry name" value="TAF"/>
    <property type="match status" value="1"/>
</dbReference>
<dbReference type="Pfam" id="PF07571">
    <property type="entry name" value="TAF6_C"/>
    <property type="match status" value="1"/>
</dbReference>
<dbReference type="SMART" id="SM00803">
    <property type="entry name" value="TAF"/>
    <property type="match status" value="1"/>
</dbReference>
<dbReference type="SUPFAM" id="SSF48371">
    <property type="entry name" value="ARM repeat"/>
    <property type="match status" value="1"/>
</dbReference>
<dbReference type="SUPFAM" id="SSF47113">
    <property type="entry name" value="Histone-fold"/>
    <property type="match status" value="1"/>
</dbReference>
<name>TAF6_XENLA</name>
<gene>
    <name type="primary">taf6</name>
</gene>
<proteinExistence type="evidence at transcript level"/>